<gene>
    <name evidence="1" type="primary">rsmA</name>
    <name evidence="1" type="synonym">ksgA</name>
    <name type="ordered locus">Ccon26_19910</name>
    <name type="ORF">CCC13826_1888</name>
</gene>
<accession>A7ZGB4</accession>
<sequence>MIKAKKHFGQNFLQDKATLDKIIQAIPKDVENVVEIGPGLGDLTFRLLQIYKTTSFEIDRELFQILKVKFANEIQNGQLKLFCKDALEQWQQEGGLSSENYFLVANLPYYVATKMILNAIDDEKCLGLIVMIQKEVALKFSAKSKDKEFSALSILASLQGRCELLFDVDAKLFNPPPKVTSSVIKLQKTKKIFGKDGIFKDAKQYEAFKAFLRAAFASPRKTLLKNLSTNFDKKALEEIFENMNLATNLRPHELDVDSYLKIFEITKEDNERQKRRESCN</sequence>
<dbReference type="EC" id="2.1.1.182" evidence="1"/>
<dbReference type="EMBL" id="CP000792">
    <property type="protein sequence ID" value="EAT99072.1"/>
    <property type="molecule type" value="Genomic_DNA"/>
</dbReference>
<dbReference type="RefSeq" id="WP_012140658.1">
    <property type="nucleotide sequence ID" value="NC_009802.2"/>
</dbReference>
<dbReference type="SMR" id="A7ZGB4"/>
<dbReference type="STRING" id="360104.CCC13826_1888"/>
<dbReference type="KEGG" id="cco:CCC13826_1888"/>
<dbReference type="eggNOG" id="COG0030">
    <property type="taxonomic scope" value="Bacteria"/>
</dbReference>
<dbReference type="HOGENOM" id="CLU_041220_0_2_7"/>
<dbReference type="OrthoDB" id="9814755at2"/>
<dbReference type="Proteomes" id="UP000001121">
    <property type="component" value="Chromosome"/>
</dbReference>
<dbReference type="GO" id="GO:0005829">
    <property type="term" value="C:cytosol"/>
    <property type="evidence" value="ECO:0007669"/>
    <property type="project" value="TreeGrafter"/>
</dbReference>
<dbReference type="GO" id="GO:0052908">
    <property type="term" value="F:16S rRNA (adenine(1518)-N(6)/adenine(1519)-N(6))-dimethyltransferase activity"/>
    <property type="evidence" value="ECO:0007669"/>
    <property type="project" value="UniProtKB-EC"/>
</dbReference>
<dbReference type="GO" id="GO:0003723">
    <property type="term" value="F:RNA binding"/>
    <property type="evidence" value="ECO:0007669"/>
    <property type="project" value="UniProtKB-KW"/>
</dbReference>
<dbReference type="Gene3D" id="1.10.8.100">
    <property type="entry name" value="Ribosomal RNA adenine dimethylase-like, domain 2"/>
    <property type="match status" value="1"/>
</dbReference>
<dbReference type="Gene3D" id="3.40.50.150">
    <property type="entry name" value="Vaccinia Virus protein VP39"/>
    <property type="match status" value="1"/>
</dbReference>
<dbReference type="HAMAP" id="MF_00607">
    <property type="entry name" value="16SrRNA_methyltr_A"/>
    <property type="match status" value="1"/>
</dbReference>
<dbReference type="InterPro" id="IPR001737">
    <property type="entry name" value="KsgA/Erm"/>
</dbReference>
<dbReference type="InterPro" id="IPR023165">
    <property type="entry name" value="rRNA_Ade_diMease-like_C"/>
</dbReference>
<dbReference type="InterPro" id="IPR020598">
    <property type="entry name" value="rRNA_Ade_methylase_Trfase_N"/>
</dbReference>
<dbReference type="InterPro" id="IPR011530">
    <property type="entry name" value="rRNA_adenine_dimethylase"/>
</dbReference>
<dbReference type="InterPro" id="IPR029063">
    <property type="entry name" value="SAM-dependent_MTases_sf"/>
</dbReference>
<dbReference type="NCBIfam" id="TIGR00755">
    <property type="entry name" value="ksgA"/>
    <property type="match status" value="1"/>
</dbReference>
<dbReference type="PANTHER" id="PTHR11727">
    <property type="entry name" value="DIMETHYLADENOSINE TRANSFERASE"/>
    <property type="match status" value="1"/>
</dbReference>
<dbReference type="PANTHER" id="PTHR11727:SF7">
    <property type="entry name" value="DIMETHYLADENOSINE TRANSFERASE-RELATED"/>
    <property type="match status" value="1"/>
</dbReference>
<dbReference type="Pfam" id="PF00398">
    <property type="entry name" value="RrnaAD"/>
    <property type="match status" value="1"/>
</dbReference>
<dbReference type="SMART" id="SM00650">
    <property type="entry name" value="rADc"/>
    <property type="match status" value="1"/>
</dbReference>
<dbReference type="SUPFAM" id="SSF53335">
    <property type="entry name" value="S-adenosyl-L-methionine-dependent methyltransferases"/>
    <property type="match status" value="1"/>
</dbReference>
<dbReference type="PROSITE" id="PS51689">
    <property type="entry name" value="SAM_RNA_A_N6_MT"/>
    <property type="match status" value="1"/>
</dbReference>
<organism>
    <name type="scientific">Campylobacter concisus (strain 13826)</name>
    <dbReference type="NCBI Taxonomy" id="360104"/>
    <lineage>
        <taxon>Bacteria</taxon>
        <taxon>Pseudomonadati</taxon>
        <taxon>Campylobacterota</taxon>
        <taxon>Epsilonproteobacteria</taxon>
        <taxon>Campylobacterales</taxon>
        <taxon>Campylobacteraceae</taxon>
        <taxon>Campylobacter</taxon>
    </lineage>
</organism>
<protein>
    <recommendedName>
        <fullName evidence="1">Ribosomal RNA small subunit methyltransferase A</fullName>
        <ecNumber evidence="1">2.1.1.182</ecNumber>
    </recommendedName>
    <alternativeName>
        <fullName evidence="1">16S rRNA (adenine(1518)-N(6)/adenine(1519)-N(6))-dimethyltransferase</fullName>
    </alternativeName>
    <alternativeName>
        <fullName evidence="1">16S rRNA dimethyladenosine transferase</fullName>
    </alternativeName>
    <alternativeName>
        <fullName evidence="1">16S rRNA dimethylase</fullName>
    </alternativeName>
    <alternativeName>
        <fullName evidence="1">S-adenosylmethionine-6-N', N'-adenosyl(rRNA) dimethyltransferase</fullName>
    </alternativeName>
</protein>
<keyword id="KW-0963">Cytoplasm</keyword>
<keyword id="KW-0489">Methyltransferase</keyword>
<keyword id="KW-0694">RNA-binding</keyword>
<keyword id="KW-0698">rRNA processing</keyword>
<keyword id="KW-0949">S-adenosyl-L-methionine</keyword>
<keyword id="KW-0808">Transferase</keyword>
<evidence type="ECO:0000255" key="1">
    <source>
        <dbReference type="HAMAP-Rule" id="MF_00607"/>
    </source>
</evidence>
<name>RSMA_CAMC1</name>
<reference key="1">
    <citation type="submission" date="2007-10" db="EMBL/GenBank/DDBJ databases">
        <title>Genome sequence of Campylobacter concisus 13826 isolated from human feces.</title>
        <authorList>
            <person name="Fouts D.E."/>
            <person name="Mongodin E.F."/>
            <person name="Puiu D."/>
            <person name="Sebastian Y."/>
            <person name="Miller W.G."/>
            <person name="Mandrell R.E."/>
            <person name="On S."/>
            <person name="Nelson K.E."/>
        </authorList>
    </citation>
    <scope>NUCLEOTIDE SEQUENCE [LARGE SCALE GENOMIC DNA]</scope>
    <source>
        <strain>13826</strain>
    </source>
</reference>
<comment type="function">
    <text evidence="1">Specifically dimethylates two adjacent adenosines (A1518 and A1519) in the loop of a conserved hairpin near the 3'-end of 16S rRNA in the 30S particle. May play a critical role in biogenesis of 30S subunits.</text>
</comment>
<comment type="catalytic activity">
    <reaction evidence="1">
        <text>adenosine(1518)/adenosine(1519) in 16S rRNA + 4 S-adenosyl-L-methionine = N(6)-dimethyladenosine(1518)/N(6)-dimethyladenosine(1519) in 16S rRNA + 4 S-adenosyl-L-homocysteine + 4 H(+)</text>
        <dbReference type="Rhea" id="RHEA:19609"/>
        <dbReference type="Rhea" id="RHEA-COMP:10232"/>
        <dbReference type="Rhea" id="RHEA-COMP:10233"/>
        <dbReference type="ChEBI" id="CHEBI:15378"/>
        <dbReference type="ChEBI" id="CHEBI:57856"/>
        <dbReference type="ChEBI" id="CHEBI:59789"/>
        <dbReference type="ChEBI" id="CHEBI:74411"/>
        <dbReference type="ChEBI" id="CHEBI:74493"/>
        <dbReference type="EC" id="2.1.1.182"/>
    </reaction>
</comment>
<comment type="subcellular location">
    <subcellularLocation>
        <location evidence="1">Cytoplasm</location>
    </subcellularLocation>
</comment>
<comment type="similarity">
    <text evidence="1">Belongs to the class I-like SAM-binding methyltransferase superfamily. rRNA adenine N(6)-methyltransferase family. RsmA subfamily.</text>
</comment>
<feature type="chain" id="PRO_1000072646" description="Ribosomal RNA small subunit methyltransferase A">
    <location>
        <begin position="1"/>
        <end position="280"/>
    </location>
</feature>
<feature type="binding site" evidence="1">
    <location>
        <position position="11"/>
    </location>
    <ligand>
        <name>S-adenosyl-L-methionine</name>
        <dbReference type="ChEBI" id="CHEBI:59789"/>
    </ligand>
</feature>
<feature type="binding site" evidence="1">
    <location>
        <position position="13"/>
    </location>
    <ligand>
        <name>S-adenosyl-L-methionine</name>
        <dbReference type="ChEBI" id="CHEBI:59789"/>
    </ligand>
</feature>
<feature type="binding site" evidence="1">
    <location>
        <position position="37"/>
    </location>
    <ligand>
        <name>S-adenosyl-L-methionine</name>
        <dbReference type="ChEBI" id="CHEBI:59789"/>
    </ligand>
</feature>
<feature type="binding site" evidence="1">
    <location>
        <position position="57"/>
    </location>
    <ligand>
        <name>S-adenosyl-L-methionine</name>
        <dbReference type="ChEBI" id="CHEBI:59789"/>
    </ligand>
</feature>
<feature type="binding site" evidence="1">
    <location>
        <position position="85"/>
    </location>
    <ligand>
        <name>S-adenosyl-L-methionine</name>
        <dbReference type="ChEBI" id="CHEBI:59789"/>
    </ligand>
</feature>
<feature type="binding site" evidence="1">
    <location>
        <position position="106"/>
    </location>
    <ligand>
        <name>S-adenosyl-L-methionine</name>
        <dbReference type="ChEBI" id="CHEBI:59789"/>
    </ligand>
</feature>
<proteinExistence type="inferred from homology"/>